<reference key="1">
    <citation type="journal article" date="2009" name="PLoS Genet.">
        <title>Organised genome dynamics in the Escherichia coli species results in highly diverse adaptive paths.</title>
        <authorList>
            <person name="Touchon M."/>
            <person name="Hoede C."/>
            <person name="Tenaillon O."/>
            <person name="Barbe V."/>
            <person name="Baeriswyl S."/>
            <person name="Bidet P."/>
            <person name="Bingen E."/>
            <person name="Bonacorsi S."/>
            <person name="Bouchier C."/>
            <person name="Bouvet O."/>
            <person name="Calteau A."/>
            <person name="Chiapello H."/>
            <person name="Clermont O."/>
            <person name="Cruveiller S."/>
            <person name="Danchin A."/>
            <person name="Diard M."/>
            <person name="Dossat C."/>
            <person name="Karoui M.E."/>
            <person name="Frapy E."/>
            <person name="Garry L."/>
            <person name="Ghigo J.M."/>
            <person name="Gilles A.M."/>
            <person name="Johnson J."/>
            <person name="Le Bouguenec C."/>
            <person name="Lescat M."/>
            <person name="Mangenot S."/>
            <person name="Martinez-Jehanne V."/>
            <person name="Matic I."/>
            <person name="Nassif X."/>
            <person name="Oztas S."/>
            <person name="Petit M.A."/>
            <person name="Pichon C."/>
            <person name="Rouy Z."/>
            <person name="Ruf C.S."/>
            <person name="Schneider D."/>
            <person name="Tourret J."/>
            <person name="Vacherie B."/>
            <person name="Vallenet D."/>
            <person name="Medigue C."/>
            <person name="Rocha E.P.C."/>
            <person name="Denamur E."/>
        </authorList>
    </citation>
    <scope>NUCLEOTIDE SEQUENCE [LARGE SCALE GENOMIC DNA]</scope>
    <source>
        <strain>ATCC 35469 / DSM 13698 / BCRC 15582 / CCUG 18766 / IAM 14443 / JCM 21226 / LMG 7866 / NBRC 102419 / NCTC 12128 / CDC 0568-73</strain>
    </source>
</reference>
<dbReference type="EC" id="2.8.1.-" evidence="1"/>
<dbReference type="EMBL" id="CU928158">
    <property type="protein sequence ID" value="CAQ89141.1"/>
    <property type="molecule type" value="Genomic_DNA"/>
</dbReference>
<dbReference type="RefSeq" id="WP_000081411.1">
    <property type="nucleotide sequence ID" value="NC_011740.1"/>
</dbReference>
<dbReference type="SMR" id="B7LRU9"/>
<dbReference type="KEGG" id="efe:EFER_1625"/>
<dbReference type="HOGENOM" id="CLU_026481_0_0_6"/>
<dbReference type="OrthoDB" id="9801054at2"/>
<dbReference type="Proteomes" id="UP000000745">
    <property type="component" value="Chromosome"/>
</dbReference>
<dbReference type="GO" id="GO:0005737">
    <property type="term" value="C:cytoplasm"/>
    <property type="evidence" value="ECO:0007669"/>
    <property type="project" value="UniProtKB-SubCell"/>
</dbReference>
<dbReference type="GO" id="GO:0051539">
    <property type="term" value="F:4 iron, 4 sulfur cluster binding"/>
    <property type="evidence" value="ECO:0007669"/>
    <property type="project" value="UniProtKB-UniRule"/>
</dbReference>
<dbReference type="GO" id="GO:0005524">
    <property type="term" value="F:ATP binding"/>
    <property type="evidence" value="ECO:0007669"/>
    <property type="project" value="UniProtKB-UniRule"/>
</dbReference>
<dbReference type="GO" id="GO:0000287">
    <property type="term" value="F:magnesium ion binding"/>
    <property type="evidence" value="ECO:0007669"/>
    <property type="project" value="UniProtKB-UniRule"/>
</dbReference>
<dbReference type="GO" id="GO:0016783">
    <property type="term" value="F:sulfurtransferase activity"/>
    <property type="evidence" value="ECO:0007669"/>
    <property type="project" value="UniProtKB-UniRule"/>
</dbReference>
<dbReference type="GO" id="GO:0000049">
    <property type="term" value="F:tRNA binding"/>
    <property type="evidence" value="ECO:0007669"/>
    <property type="project" value="UniProtKB-KW"/>
</dbReference>
<dbReference type="GO" id="GO:0034227">
    <property type="term" value="P:tRNA thio-modification"/>
    <property type="evidence" value="ECO:0007669"/>
    <property type="project" value="UniProtKB-UniRule"/>
</dbReference>
<dbReference type="CDD" id="cd24138">
    <property type="entry name" value="TtcA-like"/>
    <property type="match status" value="1"/>
</dbReference>
<dbReference type="FunFam" id="3.40.50.620:FF:000046">
    <property type="entry name" value="tRNA-cytidine(32) 2-sulfurtransferase"/>
    <property type="match status" value="1"/>
</dbReference>
<dbReference type="Gene3D" id="3.40.50.620">
    <property type="entry name" value="HUPs"/>
    <property type="match status" value="1"/>
</dbReference>
<dbReference type="HAMAP" id="MF_01850">
    <property type="entry name" value="TtcA"/>
    <property type="match status" value="1"/>
</dbReference>
<dbReference type="InterPro" id="IPR014729">
    <property type="entry name" value="Rossmann-like_a/b/a_fold"/>
</dbReference>
<dbReference type="InterPro" id="IPR011063">
    <property type="entry name" value="TilS/TtcA_N"/>
</dbReference>
<dbReference type="InterPro" id="IPR012089">
    <property type="entry name" value="tRNA_Cyd_32_2_STrfase"/>
</dbReference>
<dbReference type="InterPro" id="IPR035107">
    <property type="entry name" value="tRNA_thiolation_TtcA_Ctu1"/>
</dbReference>
<dbReference type="NCBIfam" id="NF007972">
    <property type="entry name" value="PRK10696.1"/>
    <property type="match status" value="1"/>
</dbReference>
<dbReference type="PANTHER" id="PTHR43686:SF1">
    <property type="entry name" value="AMINOTRAN_5 DOMAIN-CONTAINING PROTEIN"/>
    <property type="match status" value="1"/>
</dbReference>
<dbReference type="PANTHER" id="PTHR43686">
    <property type="entry name" value="SULFURTRANSFERASE-RELATED"/>
    <property type="match status" value="1"/>
</dbReference>
<dbReference type="Pfam" id="PF01171">
    <property type="entry name" value="ATP_bind_3"/>
    <property type="match status" value="1"/>
</dbReference>
<dbReference type="PIRSF" id="PIRSF004976">
    <property type="entry name" value="ATPase_YdaO"/>
    <property type="match status" value="1"/>
</dbReference>
<dbReference type="SUPFAM" id="SSF52402">
    <property type="entry name" value="Adenine nucleotide alpha hydrolases-like"/>
    <property type="match status" value="1"/>
</dbReference>
<keyword id="KW-0004">4Fe-4S</keyword>
<keyword id="KW-0067">ATP-binding</keyword>
<keyword id="KW-0963">Cytoplasm</keyword>
<keyword id="KW-0408">Iron</keyword>
<keyword id="KW-0411">Iron-sulfur</keyword>
<keyword id="KW-0460">Magnesium</keyword>
<keyword id="KW-0479">Metal-binding</keyword>
<keyword id="KW-0547">Nucleotide-binding</keyword>
<keyword id="KW-0694">RNA-binding</keyword>
<keyword id="KW-0808">Transferase</keyword>
<keyword id="KW-0819">tRNA processing</keyword>
<keyword id="KW-0820">tRNA-binding</keyword>
<name>TTCA_ESCF3</name>
<sequence length="311" mass="35539">MSQNQEFSKKEIYNLNKLQKRLRRNVGEAIADFNMIEDGDRIMVCLSGGKDSYTMLEILRNLQQSAPISFSLVAVNLDQKQPGFPEHILPEYLEKLGVEYKIVEENTYGIVKEKIPEGKTTCSLCSRLRRGILYRTATELGATKIALGHHRDDILQTLFLNMFYGGKMKGMPPKLMSDDGKHIVIRPLAYCREKDIQRFADAKAFPIIPCNLCGSQPNLQRQVIADMLRDWDKRYPGRIETMFSAMQNVVPSHLCDTNLFDFKGIKHGFEVINGGDLAFDREELPLQPAGWQPEDDENQLDELRLNVVEVK</sequence>
<gene>
    <name evidence="1" type="primary">ttcA</name>
    <name type="ordered locus">EFER_1625</name>
</gene>
<organism>
    <name type="scientific">Escherichia fergusonii (strain ATCC 35469 / DSM 13698 / CCUG 18766 / IAM 14443 / JCM 21226 / LMG 7866 / NBRC 102419 / NCTC 12128 / CDC 0568-73)</name>
    <dbReference type="NCBI Taxonomy" id="585054"/>
    <lineage>
        <taxon>Bacteria</taxon>
        <taxon>Pseudomonadati</taxon>
        <taxon>Pseudomonadota</taxon>
        <taxon>Gammaproteobacteria</taxon>
        <taxon>Enterobacterales</taxon>
        <taxon>Enterobacteriaceae</taxon>
        <taxon>Escherichia</taxon>
    </lineage>
</organism>
<evidence type="ECO:0000255" key="1">
    <source>
        <dbReference type="HAMAP-Rule" id="MF_01850"/>
    </source>
</evidence>
<feature type="chain" id="PRO_1000188643" description="tRNA-cytidine(32) 2-sulfurtransferase">
    <location>
        <begin position="1"/>
        <end position="311"/>
    </location>
</feature>
<feature type="short sequence motif" description="PP-loop motif" evidence="1">
    <location>
        <begin position="47"/>
        <end position="52"/>
    </location>
</feature>
<feature type="binding site" evidence="1">
    <location>
        <position position="122"/>
    </location>
    <ligand>
        <name>[4Fe-4S] cluster</name>
        <dbReference type="ChEBI" id="CHEBI:49883"/>
    </ligand>
</feature>
<feature type="binding site" evidence="1">
    <location>
        <position position="125"/>
    </location>
    <ligand>
        <name>[4Fe-4S] cluster</name>
        <dbReference type="ChEBI" id="CHEBI:49883"/>
    </ligand>
</feature>
<feature type="binding site" evidence="1">
    <location>
        <position position="213"/>
    </location>
    <ligand>
        <name>[4Fe-4S] cluster</name>
        <dbReference type="ChEBI" id="CHEBI:49883"/>
    </ligand>
</feature>
<comment type="function">
    <text evidence="1">Catalyzes the ATP-dependent 2-thiolation of cytidine in position 32 of tRNA, to form 2-thiocytidine (s(2)C32). The sulfur atoms are provided by the cysteine/cysteine desulfurase (IscS) system.</text>
</comment>
<comment type="catalytic activity">
    <reaction evidence="1">
        <text>cytidine(32) in tRNA + S-sulfanyl-L-cysteinyl-[cysteine desulfurase] + AH2 + ATP = 2-thiocytidine(32) in tRNA + L-cysteinyl-[cysteine desulfurase] + A + AMP + diphosphate + H(+)</text>
        <dbReference type="Rhea" id="RHEA:57048"/>
        <dbReference type="Rhea" id="RHEA-COMP:10288"/>
        <dbReference type="Rhea" id="RHEA-COMP:12157"/>
        <dbReference type="Rhea" id="RHEA-COMP:12158"/>
        <dbReference type="Rhea" id="RHEA-COMP:14821"/>
        <dbReference type="ChEBI" id="CHEBI:13193"/>
        <dbReference type="ChEBI" id="CHEBI:15378"/>
        <dbReference type="ChEBI" id="CHEBI:17499"/>
        <dbReference type="ChEBI" id="CHEBI:29950"/>
        <dbReference type="ChEBI" id="CHEBI:30616"/>
        <dbReference type="ChEBI" id="CHEBI:33019"/>
        <dbReference type="ChEBI" id="CHEBI:61963"/>
        <dbReference type="ChEBI" id="CHEBI:82748"/>
        <dbReference type="ChEBI" id="CHEBI:141453"/>
        <dbReference type="ChEBI" id="CHEBI:456215"/>
    </reaction>
    <physiologicalReaction direction="left-to-right" evidence="1">
        <dbReference type="Rhea" id="RHEA:57049"/>
    </physiologicalReaction>
</comment>
<comment type="cofactor">
    <cofactor evidence="1">
        <name>Mg(2+)</name>
        <dbReference type="ChEBI" id="CHEBI:18420"/>
    </cofactor>
</comment>
<comment type="cofactor">
    <cofactor evidence="1">
        <name>[4Fe-4S] cluster</name>
        <dbReference type="ChEBI" id="CHEBI:49883"/>
    </cofactor>
    <text evidence="1">Binds 1 [4Fe-4S] cluster per subunit. The cluster is chelated by three Cys residues, the fourth Fe has a free coordination site that may bind a sulfur atom transferred from the persulfide of IscS.</text>
</comment>
<comment type="pathway">
    <text evidence="1">tRNA modification.</text>
</comment>
<comment type="subunit">
    <text evidence="1">Homodimer.</text>
</comment>
<comment type="subcellular location">
    <subcellularLocation>
        <location evidence="1">Cytoplasm</location>
    </subcellularLocation>
</comment>
<comment type="miscellaneous">
    <text evidence="1">The thiolation reaction likely consists of two steps: a first activation step by ATP to form an adenylated intermediate of the target base of tRNA, and a second nucleophilic substitution step of the sulfur (S) atom supplied by the hydrosulfide attached to the Fe-S cluster.</text>
</comment>
<comment type="similarity">
    <text evidence="1">Belongs to the TtcA family.</text>
</comment>
<accession>B7LRU9</accession>
<proteinExistence type="inferred from homology"/>
<protein>
    <recommendedName>
        <fullName evidence="1">tRNA-cytidine(32) 2-sulfurtransferase</fullName>
        <ecNumber evidence="1">2.8.1.-</ecNumber>
    </recommendedName>
    <alternativeName>
        <fullName evidence="1">Two-thiocytidine biosynthesis protein A</fullName>
    </alternativeName>
    <alternativeName>
        <fullName evidence="1">tRNA 2-thiocytidine biosynthesis protein TtcA</fullName>
    </alternativeName>
</protein>